<feature type="chain" id="PRO_0000241920" description="Orotidine 5'-phosphate decarboxylase">
    <location>
        <begin position="1"/>
        <end position="232"/>
    </location>
</feature>
<feature type="active site" description="Proton donor" evidence="1">
    <location>
        <position position="61"/>
    </location>
</feature>
<feature type="binding site" evidence="1">
    <location>
        <position position="11"/>
    </location>
    <ligand>
        <name>substrate</name>
    </ligand>
</feature>
<feature type="binding site" evidence="1">
    <location>
        <position position="32"/>
    </location>
    <ligand>
        <name>substrate</name>
    </ligand>
</feature>
<feature type="binding site" evidence="1">
    <location>
        <begin position="59"/>
        <end position="68"/>
    </location>
    <ligand>
        <name>substrate</name>
    </ligand>
</feature>
<feature type="binding site" evidence="1">
    <location>
        <position position="116"/>
    </location>
    <ligand>
        <name>substrate</name>
    </ligand>
</feature>
<feature type="binding site" evidence="1">
    <location>
        <position position="178"/>
    </location>
    <ligand>
        <name>substrate</name>
    </ligand>
</feature>
<feature type="binding site" evidence="1">
    <location>
        <position position="188"/>
    </location>
    <ligand>
        <name>substrate</name>
    </ligand>
</feature>
<feature type="binding site" evidence="1">
    <location>
        <position position="208"/>
    </location>
    <ligand>
        <name>substrate</name>
    </ligand>
</feature>
<feature type="binding site" evidence="1">
    <location>
        <position position="209"/>
    </location>
    <ligand>
        <name>substrate</name>
    </ligand>
</feature>
<name>PYRF_SYNJA</name>
<organism>
    <name type="scientific">Synechococcus sp. (strain JA-3-3Ab)</name>
    <name type="common">Cyanobacteria bacterium Yellowstone A-Prime</name>
    <dbReference type="NCBI Taxonomy" id="321327"/>
    <lineage>
        <taxon>Bacteria</taxon>
        <taxon>Bacillati</taxon>
        <taxon>Cyanobacteriota</taxon>
        <taxon>Cyanophyceae</taxon>
        <taxon>Synechococcales</taxon>
        <taxon>Synechococcaceae</taxon>
        <taxon>Synechococcus</taxon>
    </lineage>
</organism>
<evidence type="ECO:0000255" key="1">
    <source>
        <dbReference type="HAMAP-Rule" id="MF_01200"/>
    </source>
</evidence>
<gene>
    <name evidence="1" type="primary">pyrF</name>
    <name type="ordered locus">CYA_1712</name>
</gene>
<sequence length="232" mass="24821">MQGSRLIVALDTASWEQALKWVDRLPQVLWWKVGLELFTAVGPQILQALKERGKRIFLDLKLHDIPHTVGRAAQVAVGYGVDLLTVHAAGGSAMLRAAVAATQGSSCRLLAVTLLTSLGPDQVRQELGVERDPGDYVLQLARLALDQGVSGLVCSPQEVGRLRQALGPEVLLVTPGIRLGDPEAEDDQRRVCTPAAALRAGADYLVVGRPITAAADPVSAWQRFQAVEEAIG</sequence>
<dbReference type="EC" id="4.1.1.23" evidence="1"/>
<dbReference type="EMBL" id="CP000239">
    <property type="protein sequence ID" value="ABC99867.1"/>
    <property type="molecule type" value="Genomic_DNA"/>
</dbReference>
<dbReference type="RefSeq" id="WP_011430543.1">
    <property type="nucleotide sequence ID" value="NC_007775.1"/>
</dbReference>
<dbReference type="SMR" id="Q2JTW6"/>
<dbReference type="STRING" id="321327.CYA_1712"/>
<dbReference type="KEGG" id="cya:CYA_1712"/>
<dbReference type="eggNOG" id="COG0284">
    <property type="taxonomic scope" value="Bacteria"/>
</dbReference>
<dbReference type="HOGENOM" id="CLU_067069_1_0_3"/>
<dbReference type="OrthoDB" id="9806203at2"/>
<dbReference type="UniPathway" id="UPA00070">
    <property type="reaction ID" value="UER00120"/>
</dbReference>
<dbReference type="Proteomes" id="UP000008818">
    <property type="component" value="Chromosome"/>
</dbReference>
<dbReference type="GO" id="GO:0005829">
    <property type="term" value="C:cytosol"/>
    <property type="evidence" value="ECO:0007669"/>
    <property type="project" value="TreeGrafter"/>
</dbReference>
<dbReference type="GO" id="GO:0004590">
    <property type="term" value="F:orotidine-5'-phosphate decarboxylase activity"/>
    <property type="evidence" value="ECO:0007669"/>
    <property type="project" value="UniProtKB-UniRule"/>
</dbReference>
<dbReference type="GO" id="GO:0006207">
    <property type="term" value="P:'de novo' pyrimidine nucleobase biosynthetic process"/>
    <property type="evidence" value="ECO:0007669"/>
    <property type="project" value="InterPro"/>
</dbReference>
<dbReference type="GO" id="GO:0044205">
    <property type="term" value="P:'de novo' UMP biosynthetic process"/>
    <property type="evidence" value="ECO:0007669"/>
    <property type="project" value="UniProtKB-UniRule"/>
</dbReference>
<dbReference type="CDD" id="cd04725">
    <property type="entry name" value="OMP_decarboxylase_like"/>
    <property type="match status" value="1"/>
</dbReference>
<dbReference type="FunFam" id="3.20.20.70:FF:000015">
    <property type="entry name" value="Orotidine 5'-phosphate decarboxylase"/>
    <property type="match status" value="1"/>
</dbReference>
<dbReference type="Gene3D" id="3.20.20.70">
    <property type="entry name" value="Aldolase class I"/>
    <property type="match status" value="1"/>
</dbReference>
<dbReference type="HAMAP" id="MF_01200_B">
    <property type="entry name" value="OMPdecase_type1_B"/>
    <property type="match status" value="1"/>
</dbReference>
<dbReference type="InterPro" id="IPR013785">
    <property type="entry name" value="Aldolase_TIM"/>
</dbReference>
<dbReference type="InterPro" id="IPR014732">
    <property type="entry name" value="OMPdecase"/>
</dbReference>
<dbReference type="InterPro" id="IPR018089">
    <property type="entry name" value="OMPdecase_AS"/>
</dbReference>
<dbReference type="InterPro" id="IPR047596">
    <property type="entry name" value="OMPdecase_bac"/>
</dbReference>
<dbReference type="InterPro" id="IPR001754">
    <property type="entry name" value="OMPdeCOase_dom"/>
</dbReference>
<dbReference type="InterPro" id="IPR011060">
    <property type="entry name" value="RibuloseP-bd_barrel"/>
</dbReference>
<dbReference type="NCBIfam" id="NF001273">
    <property type="entry name" value="PRK00230.1"/>
    <property type="match status" value="1"/>
</dbReference>
<dbReference type="NCBIfam" id="TIGR01740">
    <property type="entry name" value="pyrF"/>
    <property type="match status" value="1"/>
</dbReference>
<dbReference type="PANTHER" id="PTHR32119">
    <property type="entry name" value="OROTIDINE 5'-PHOSPHATE DECARBOXYLASE"/>
    <property type="match status" value="1"/>
</dbReference>
<dbReference type="PANTHER" id="PTHR32119:SF2">
    <property type="entry name" value="OROTIDINE 5'-PHOSPHATE DECARBOXYLASE"/>
    <property type="match status" value="1"/>
</dbReference>
<dbReference type="Pfam" id="PF00215">
    <property type="entry name" value="OMPdecase"/>
    <property type="match status" value="1"/>
</dbReference>
<dbReference type="SMART" id="SM00934">
    <property type="entry name" value="OMPdecase"/>
    <property type="match status" value="1"/>
</dbReference>
<dbReference type="SUPFAM" id="SSF51366">
    <property type="entry name" value="Ribulose-phoshate binding barrel"/>
    <property type="match status" value="1"/>
</dbReference>
<dbReference type="PROSITE" id="PS00156">
    <property type="entry name" value="OMPDECASE"/>
    <property type="match status" value="1"/>
</dbReference>
<keyword id="KW-0210">Decarboxylase</keyword>
<keyword id="KW-0456">Lyase</keyword>
<keyword id="KW-0665">Pyrimidine biosynthesis</keyword>
<comment type="function">
    <text evidence="1">Catalyzes the decarboxylation of orotidine 5'-monophosphate (OMP) to uridine 5'-monophosphate (UMP).</text>
</comment>
<comment type="catalytic activity">
    <reaction evidence="1">
        <text>orotidine 5'-phosphate + H(+) = UMP + CO2</text>
        <dbReference type="Rhea" id="RHEA:11596"/>
        <dbReference type="ChEBI" id="CHEBI:15378"/>
        <dbReference type="ChEBI" id="CHEBI:16526"/>
        <dbReference type="ChEBI" id="CHEBI:57538"/>
        <dbReference type="ChEBI" id="CHEBI:57865"/>
        <dbReference type="EC" id="4.1.1.23"/>
    </reaction>
</comment>
<comment type="pathway">
    <text evidence="1">Pyrimidine metabolism; UMP biosynthesis via de novo pathway; UMP from orotate: step 2/2.</text>
</comment>
<comment type="subunit">
    <text evidence="1">Homodimer.</text>
</comment>
<comment type="similarity">
    <text evidence="1">Belongs to the OMP decarboxylase family. Type 1 subfamily.</text>
</comment>
<protein>
    <recommendedName>
        <fullName evidence="1">Orotidine 5'-phosphate decarboxylase</fullName>
        <ecNumber evidence="1">4.1.1.23</ecNumber>
    </recommendedName>
    <alternativeName>
        <fullName evidence="1">OMP decarboxylase</fullName>
        <shortName evidence="1">OMPDCase</shortName>
        <shortName evidence="1">OMPdecase</shortName>
    </alternativeName>
</protein>
<accession>Q2JTW6</accession>
<reference key="1">
    <citation type="journal article" date="2007" name="ISME J.">
        <title>Population level functional diversity in a microbial community revealed by comparative genomic and metagenomic analyses.</title>
        <authorList>
            <person name="Bhaya D."/>
            <person name="Grossman A.R."/>
            <person name="Steunou A.-S."/>
            <person name="Khuri N."/>
            <person name="Cohan F.M."/>
            <person name="Hamamura N."/>
            <person name="Melendrez M.C."/>
            <person name="Bateson M.M."/>
            <person name="Ward D.M."/>
            <person name="Heidelberg J.F."/>
        </authorList>
    </citation>
    <scope>NUCLEOTIDE SEQUENCE [LARGE SCALE GENOMIC DNA]</scope>
    <source>
        <strain>JA-3-3Ab</strain>
    </source>
</reference>
<proteinExistence type="inferred from homology"/>